<organism>
    <name type="scientific">Zea mays</name>
    <name type="common">Maize</name>
    <dbReference type="NCBI Taxonomy" id="4577"/>
    <lineage>
        <taxon>Eukaryota</taxon>
        <taxon>Viridiplantae</taxon>
        <taxon>Streptophyta</taxon>
        <taxon>Embryophyta</taxon>
        <taxon>Tracheophyta</taxon>
        <taxon>Spermatophyta</taxon>
        <taxon>Magnoliopsida</taxon>
        <taxon>Liliopsida</taxon>
        <taxon>Poales</taxon>
        <taxon>Poaceae</taxon>
        <taxon>PACMAD clade</taxon>
        <taxon>Panicoideae</taxon>
        <taxon>Andropogonodae</taxon>
        <taxon>Andropogoneae</taxon>
        <taxon>Tripsacinae</taxon>
        <taxon>Zea</taxon>
    </lineage>
</organism>
<name>ADT2_MAIZE</name>
<comment type="function">
    <text evidence="1 6">ADP:ATP antiporter that mediates import of ADP into the mitochondrial matrix for ATP synthesis, and export of ATP out to fuel the cell (By similarity). Cycles between the cytoplasmic-open state (c-state) and the matrix-open state (m-state): operates by the alternating access mechanism with a single substrate-binding site intermittently exposed to either the cytosolic (c-state) or matrix (m-state) side of the inner mitochondrial membrane (By similarity).</text>
</comment>
<comment type="catalytic activity">
    <reaction evidence="6">
        <text>ADP(in) + ATP(out) = ADP(out) + ATP(in)</text>
        <dbReference type="Rhea" id="RHEA:34999"/>
        <dbReference type="ChEBI" id="CHEBI:30616"/>
        <dbReference type="ChEBI" id="CHEBI:456216"/>
    </reaction>
    <physiologicalReaction direction="left-to-right" evidence="6">
        <dbReference type="Rhea" id="RHEA:35000"/>
    </physiologicalReaction>
</comment>
<comment type="activity regulation">
    <text evidence="1">The matrix-open state (m-state) is inhibited by the membrane-permeable bongkrekic acid (BKA). The cytoplasmic-open state (c-state) is inhibited by the membrane-impermeable toxic inhibitor carboxyatractyloside (CATR).</text>
</comment>
<comment type="subunit">
    <text evidence="1 2">Monomer.</text>
</comment>
<comment type="subcellular location">
    <subcellularLocation>
        <location evidence="5">Mitochondrion inner membrane</location>
        <topology evidence="7">Multi-pass membrane protein</topology>
    </subcellularLocation>
</comment>
<comment type="domain">
    <text evidence="4">The transmembrane helices are not perpendicular to the plane of the membrane, but cross the membrane at an angle. At least 2 of the odd-numbered transmembrane helices exhibit a sharp kink, due to the presence of a conserved proline residue.</text>
</comment>
<comment type="similarity">
    <text evidence="8">Belongs to the mitochondrial carrier (TC 2.A.29) family.</text>
</comment>
<dbReference type="EMBL" id="X59086">
    <property type="protein sequence ID" value="CAA41812.1"/>
    <property type="molecule type" value="mRNA"/>
</dbReference>
<dbReference type="EMBL" id="X15712">
    <property type="protein sequence ID" value="CAA33743.1"/>
    <property type="molecule type" value="Genomic_DNA"/>
</dbReference>
<dbReference type="PIR" id="S16568">
    <property type="entry name" value="S16568"/>
</dbReference>
<dbReference type="RefSeq" id="NP_001105434.1">
    <property type="nucleotide sequence ID" value="NM_001111964.1"/>
</dbReference>
<dbReference type="RefSeq" id="XP_008677791.1">
    <property type="nucleotide sequence ID" value="XM_008679569.1"/>
</dbReference>
<dbReference type="SMR" id="P12857"/>
<dbReference type="FunCoup" id="P12857">
    <property type="interactions" value="2798"/>
</dbReference>
<dbReference type="STRING" id="4577.P12857"/>
<dbReference type="PaxDb" id="4577-GRMZM2G135186_P03"/>
<dbReference type="EnsemblPlants" id="Zm00001eb189380_T001">
    <property type="protein sequence ID" value="Zm00001eb189380_P001"/>
    <property type="gene ID" value="Zm00001eb189380"/>
</dbReference>
<dbReference type="EnsemblPlants" id="Zm00001eb189380_T003">
    <property type="protein sequence ID" value="Zm00001eb189380_P003"/>
    <property type="gene ID" value="Zm00001eb189380"/>
</dbReference>
<dbReference type="EnsemblPlants" id="Zm00001eb189380_T004">
    <property type="protein sequence ID" value="Zm00001eb189380_P004"/>
    <property type="gene ID" value="Zm00001eb189380"/>
</dbReference>
<dbReference type="GeneID" id="542389"/>
<dbReference type="Gramene" id="Zm00001eb189380_T001">
    <property type="protein sequence ID" value="Zm00001eb189380_P001"/>
    <property type="gene ID" value="Zm00001eb189380"/>
</dbReference>
<dbReference type="Gramene" id="Zm00001eb189380_T003">
    <property type="protein sequence ID" value="Zm00001eb189380_P003"/>
    <property type="gene ID" value="Zm00001eb189380"/>
</dbReference>
<dbReference type="Gramene" id="Zm00001eb189380_T004">
    <property type="protein sequence ID" value="Zm00001eb189380_P004"/>
    <property type="gene ID" value="Zm00001eb189380"/>
</dbReference>
<dbReference type="KEGG" id="zma:542389"/>
<dbReference type="MaizeGDB" id="17145"/>
<dbReference type="eggNOG" id="KOG0749">
    <property type="taxonomic scope" value="Eukaryota"/>
</dbReference>
<dbReference type="HOGENOM" id="CLU_015166_12_1_1"/>
<dbReference type="InParanoid" id="P12857"/>
<dbReference type="OMA" id="CFARTLK"/>
<dbReference type="OrthoDB" id="270584at2759"/>
<dbReference type="Proteomes" id="UP000007305">
    <property type="component" value="Chromosome 4"/>
</dbReference>
<dbReference type="ExpressionAtlas" id="P12857">
    <property type="expression patterns" value="baseline and differential"/>
</dbReference>
<dbReference type="GO" id="GO:0005743">
    <property type="term" value="C:mitochondrial inner membrane"/>
    <property type="evidence" value="ECO:0007669"/>
    <property type="project" value="UniProtKB-SubCell"/>
</dbReference>
<dbReference type="GO" id="GO:0005471">
    <property type="term" value="F:ATP:ADP antiporter activity"/>
    <property type="evidence" value="ECO:0000318"/>
    <property type="project" value="GO_Central"/>
</dbReference>
<dbReference type="GO" id="GO:0140021">
    <property type="term" value="P:mitochondrial ADP transmembrane transport"/>
    <property type="evidence" value="ECO:0007669"/>
    <property type="project" value="InterPro"/>
</dbReference>
<dbReference type="GO" id="GO:1990544">
    <property type="term" value="P:mitochondrial ATP transmembrane transport"/>
    <property type="evidence" value="ECO:0007669"/>
    <property type="project" value="InterPro"/>
</dbReference>
<dbReference type="FunFam" id="1.50.40.10:FF:000001">
    <property type="entry name" value="ADP,ATP carrier protein, mitochondrial"/>
    <property type="match status" value="1"/>
</dbReference>
<dbReference type="Gene3D" id="1.50.40.10">
    <property type="entry name" value="Mitochondrial carrier domain"/>
    <property type="match status" value="1"/>
</dbReference>
<dbReference type="InterPro" id="IPR002113">
    <property type="entry name" value="ADT_euk_type"/>
</dbReference>
<dbReference type="InterPro" id="IPR002067">
    <property type="entry name" value="Mit_carrier"/>
</dbReference>
<dbReference type="InterPro" id="IPR018108">
    <property type="entry name" value="Mitochondrial_sb/sol_carrier"/>
</dbReference>
<dbReference type="InterPro" id="IPR023395">
    <property type="entry name" value="Mt_carrier_dom_sf"/>
</dbReference>
<dbReference type="PANTHER" id="PTHR45635">
    <property type="entry name" value="ADP,ATP CARRIER PROTEIN 1-RELATED-RELATED"/>
    <property type="match status" value="1"/>
</dbReference>
<dbReference type="PANTHER" id="PTHR45635:SF47">
    <property type="entry name" value="ADP,ATP CARRIER PROTEIN, MITOCHONDRIAL"/>
    <property type="match status" value="1"/>
</dbReference>
<dbReference type="Pfam" id="PF00153">
    <property type="entry name" value="Mito_carr"/>
    <property type="match status" value="3"/>
</dbReference>
<dbReference type="PRINTS" id="PR00927">
    <property type="entry name" value="ADPTRNSLCASE"/>
</dbReference>
<dbReference type="PRINTS" id="PR00926">
    <property type="entry name" value="MITOCARRIER"/>
</dbReference>
<dbReference type="SUPFAM" id="SSF103506">
    <property type="entry name" value="Mitochondrial carrier"/>
    <property type="match status" value="1"/>
</dbReference>
<dbReference type="PROSITE" id="PS50920">
    <property type="entry name" value="SOLCAR"/>
    <property type="match status" value="3"/>
</dbReference>
<keyword id="KW-0050">Antiport</keyword>
<keyword id="KW-0472">Membrane</keyword>
<keyword id="KW-0496">Mitochondrion</keyword>
<keyword id="KW-0999">Mitochondrion inner membrane</keyword>
<keyword id="KW-1185">Reference proteome</keyword>
<keyword id="KW-0677">Repeat</keyword>
<keyword id="KW-0809">Transit peptide</keyword>
<keyword id="KW-0812">Transmembrane</keyword>
<keyword id="KW-1133">Transmembrane helix</keyword>
<keyword id="KW-0813">Transport</keyword>
<protein>
    <recommendedName>
        <fullName>ADP,ATP carrier protein 2, mitochondrial</fullName>
    </recommendedName>
    <alternativeName>
        <fullName>ADP/ATP translocase 2</fullName>
    </alternativeName>
    <alternativeName>
        <fullName>Adenine nucleotide translocator 2</fullName>
        <shortName>ANT 2</shortName>
    </alternativeName>
</protein>
<sequence>MADQANQPTVLHKLGGQFHLSSSFSEGVRARNICPSFSPYERRFATRNYMTQSLWGPSMSVSGGINVPVMPTPLFANAPAEKGGKNFMIDFMMGGVSAAVSKTAAAPIERVKLLIQNQDEMIKSGRLSEPYKGIADCFKRTIKDEGFSSLWRGNTANVIRYFPTQALNFAFKDYFKRLFNFKKDRDGYWKWFAGNLASGGAAGASSLFFVYSLDYARTRLANDAKAAKGGGDRQFNGLVDVYRKTLKSDGIAGLYRGFNISCVGIIVYRGLYFGLYDSIKPVVLTGSLQDNFFASFALGWLITNGAGLASYPIDTVRRRMMMTSGEAVKYKSSLDAFQQILKKEGPKSLFKGAGANILRAIAGAGVLSGYDQLQILFFGKKYGSGGA</sequence>
<evidence type="ECO:0000250" key="1">
    <source>
        <dbReference type="UniProtKB" id="G2QNH0"/>
    </source>
</evidence>
<evidence type="ECO:0000250" key="2">
    <source>
        <dbReference type="UniProtKB" id="P02722"/>
    </source>
</evidence>
<evidence type="ECO:0000250" key="3">
    <source>
        <dbReference type="UniProtKB" id="P12235"/>
    </source>
</evidence>
<evidence type="ECO:0000250" key="4">
    <source>
        <dbReference type="UniProtKB" id="P18239"/>
    </source>
</evidence>
<evidence type="ECO:0000250" key="5">
    <source>
        <dbReference type="UniProtKB" id="P31167"/>
    </source>
</evidence>
<evidence type="ECO:0000250" key="6">
    <source>
        <dbReference type="UniProtKB" id="P48962"/>
    </source>
</evidence>
<evidence type="ECO:0000255" key="7"/>
<evidence type="ECO:0000305" key="8"/>
<accession>P12857</accession>
<feature type="transit peptide" description="Mitochondrion" evidence="7">
    <location>
        <begin position="1"/>
        <end position="77"/>
    </location>
</feature>
<feature type="chain" id="PRO_0000019249" description="ADP,ATP carrier protein 2, mitochondrial">
    <location>
        <begin position="78"/>
        <end position="387"/>
    </location>
</feature>
<feature type="transmembrane region" description="Helical; Name=1" evidence="4">
    <location>
        <begin position="87"/>
        <end position="114"/>
    </location>
</feature>
<feature type="transmembrane region" description="Helical; Name=2" evidence="4">
    <location>
        <begin position="155"/>
        <end position="179"/>
    </location>
</feature>
<feature type="transmembrane region" description="Helical; Name=3" evidence="4">
    <location>
        <begin position="188"/>
        <end position="208"/>
    </location>
</feature>
<feature type="transmembrane region" description="Helical; Name=4" evidence="4">
    <location>
        <begin position="258"/>
        <end position="279"/>
    </location>
</feature>
<feature type="transmembrane region" description="Helical; Name=5" evidence="4">
    <location>
        <begin position="293"/>
        <end position="313"/>
    </location>
</feature>
<feature type="transmembrane region" description="Helical; Name=6" evidence="4">
    <location>
        <begin position="353"/>
        <end position="373"/>
    </location>
</feature>
<feature type="repeat" description="Solcar 1">
    <location>
        <begin position="85"/>
        <end position="178"/>
    </location>
</feature>
<feature type="repeat" description="Solcar 2">
    <location>
        <begin position="190"/>
        <end position="282"/>
    </location>
</feature>
<feature type="repeat" description="Solcar 3">
    <location>
        <begin position="290"/>
        <end position="376"/>
    </location>
</feature>
<feature type="region of interest" description="Important for transport activity" evidence="3">
    <location>
        <begin position="317"/>
        <end position="322"/>
    </location>
</feature>
<feature type="short sequence motif" description="Nucleotide carrier signature motif" evidence="2">
    <location>
        <begin position="317"/>
        <end position="322"/>
    </location>
</feature>
<feature type="binding site" evidence="2">
    <location>
        <position position="160"/>
    </location>
    <ligand>
        <name>ADP</name>
        <dbReference type="ChEBI" id="CHEBI:456216"/>
    </ligand>
</feature>
<feature type="binding site" evidence="2">
    <location>
        <position position="172"/>
    </location>
    <ligand>
        <name>ADP</name>
        <dbReference type="ChEBI" id="CHEBI:456216"/>
    </ligand>
</feature>
<feature type="binding site" evidence="2">
    <location>
        <position position="317"/>
    </location>
    <ligand>
        <name>ADP</name>
        <dbReference type="ChEBI" id="CHEBI:456216"/>
    </ligand>
</feature>
<feature type="sequence conflict" description="In Ref. 2; CAA33743." evidence="8" ref="2">
    <original>Y</original>
    <variation>I</variation>
    <location>
        <position position="242"/>
    </location>
</feature>
<feature type="sequence conflict" description="In Ref. 2; CAA33743." evidence="8" ref="2">
    <original>A</original>
    <variation>G</variation>
    <location>
        <position position="327"/>
    </location>
</feature>
<gene>
    <name type="primary">ANT2</name>
    <name type="synonym">ANT-G2</name>
</gene>
<proteinExistence type="evidence at transcript level"/>
<reference key="1">
    <citation type="journal article" date="1991" name="Plant Mol. Biol.">
        <title>Nucleotide sequence of two cDNAs encoding the adenine nucleotide translocator from Zea mays L.</title>
        <authorList>
            <person name="Winning B.M."/>
            <person name="Day C.D."/>
            <person name="Sarah C.J."/>
            <person name="Leaver C.J."/>
        </authorList>
    </citation>
    <scope>NUCLEOTIDE SEQUENCE [MRNA]</scope>
    <source>
        <strain>cv. MUTIND-FR7205034</strain>
    </source>
</reference>
<reference key="2">
    <citation type="journal article" date="1989" name="Eur. J. Biochem.">
        <title>Two genes encode the adenine nucleotide translocator of maize mitochondria. Isolation, characterisation and expression of the structural genes.</title>
        <authorList>
            <person name="Leaver C.J."/>
            <person name="Bathgate B."/>
            <person name="Baker A."/>
        </authorList>
    </citation>
    <scope>NUCLEOTIDE SEQUENCE [GENOMIC DNA] OF 59-387</scope>
    <source>
        <strain>cv. B37N</strain>
    </source>
</reference>